<accession>Q9FLA3</accession>
<keyword id="KW-1185">Reference proteome</keyword>
<evidence type="ECO:0000305" key="1"/>
<reference key="1">
    <citation type="journal article" date="1998" name="DNA Res.">
        <title>Structural analysis of Arabidopsis thaliana chromosome 5. V. Sequence features of the regions of 1,381,565 bp covered by twenty one physically assigned P1 and TAC clones.</title>
        <authorList>
            <person name="Kaneko T."/>
            <person name="Kotani H."/>
            <person name="Nakamura Y."/>
            <person name="Sato S."/>
            <person name="Asamizu E."/>
            <person name="Miyajima N."/>
            <person name="Tabata S."/>
        </authorList>
    </citation>
    <scope>NUCLEOTIDE SEQUENCE [LARGE SCALE GENOMIC DNA]</scope>
    <source>
        <strain>cv. Columbia</strain>
    </source>
</reference>
<reference key="2">
    <citation type="journal article" date="2017" name="Plant J.">
        <title>Araport11: a complete reannotation of the Arabidopsis thaliana reference genome.</title>
        <authorList>
            <person name="Cheng C.Y."/>
            <person name="Krishnakumar V."/>
            <person name="Chan A.P."/>
            <person name="Thibaud-Nissen F."/>
            <person name="Schobel S."/>
            <person name="Town C.D."/>
        </authorList>
    </citation>
    <scope>GENOME REANNOTATION</scope>
    <source>
        <strain>cv. Columbia</strain>
    </source>
</reference>
<comment type="sequence caution" evidence="1">
    <conflict type="erroneous gene model prediction">
        <sequence resource="EMBL-CDS" id="BAB10877"/>
    </conflict>
</comment>
<organism>
    <name type="scientific">Arabidopsis thaliana</name>
    <name type="common">Mouse-ear cress</name>
    <dbReference type="NCBI Taxonomy" id="3702"/>
    <lineage>
        <taxon>Eukaryota</taxon>
        <taxon>Viridiplantae</taxon>
        <taxon>Streptophyta</taxon>
        <taxon>Embryophyta</taxon>
        <taxon>Tracheophyta</taxon>
        <taxon>Spermatophyta</taxon>
        <taxon>Magnoliopsida</taxon>
        <taxon>eudicotyledons</taxon>
        <taxon>Gunneridae</taxon>
        <taxon>Pentapetalae</taxon>
        <taxon>rosids</taxon>
        <taxon>malvids</taxon>
        <taxon>Brassicales</taxon>
        <taxon>Brassicaceae</taxon>
        <taxon>Camelineae</taxon>
        <taxon>Arabidopsis</taxon>
    </lineage>
</organism>
<feature type="chain" id="PRO_0000283549" description="Putative FBD-associated F-box protein At5g44940">
    <location>
        <begin position="1"/>
        <end position="377"/>
    </location>
</feature>
<feature type="domain" description="F-box">
    <location>
        <begin position="4"/>
        <end position="50"/>
    </location>
</feature>
<feature type="domain" description="FBD">
    <location>
        <begin position="297"/>
        <end position="346"/>
    </location>
</feature>
<protein>
    <recommendedName>
        <fullName>Putative FBD-associated F-box protein At5g44940</fullName>
    </recommendedName>
</protein>
<sequence>MEEFDYISEFPDCLLTQILLNLPTKDSVKTSVLSKRWRNLWLNVPGLRLRTFDFPVFPYPYEEGFVRFMDRFMEFKCRSRLQKFMITYFEHNGYRDRLMELIGTLVDRGIQHLYVYMHTCNRVDFIRQNIYKSKTLVSLKLYNVELKNPEFVVSLPCLKILKLENIFHGEDGPLVVEKLISGCPVLEDLELIRPFDDNVGYGSLTAPKYSRNRDIIGDFLTVISSVRHTIICYSTSKMLYSYSKQLGPIPQFHNLYHLQARFSSSSLQLLPTFLESCPACPNLKNLIMEFPFEPKNIDFHKVPQCLISTLEYVQIEELILKEKSGIKLVDYFLENSAVLKKLTLSFTYHSKKKQDPESYKKLLTSTKLSPTCQIIID</sequence>
<proteinExistence type="predicted"/>
<dbReference type="EMBL" id="AB010693">
    <property type="protein sequence ID" value="BAB10877.1"/>
    <property type="status" value="ALT_SEQ"/>
    <property type="molecule type" value="Genomic_DNA"/>
</dbReference>
<dbReference type="EMBL" id="CP002688">
    <property type="protein sequence ID" value="AED95178.1"/>
    <property type="molecule type" value="Genomic_DNA"/>
</dbReference>
<dbReference type="RefSeq" id="NP_199307.2">
    <property type="nucleotide sequence ID" value="NM_123862.2"/>
</dbReference>
<dbReference type="STRING" id="3702.Q9FLA3"/>
<dbReference type="PaxDb" id="3702-AT5G44940.1"/>
<dbReference type="EnsemblPlants" id="AT5G44940.1">
    <property type="protein sequence ID" value="AT5G44940.1"/>
    <property type="gene ID" value="AT5G44940"/>
</dbReference>
<dbReference type="GeneID" id="834525"/>
<dbReference type="Gramene" id="AT5G44940.1">
    <property type="protein sequence ID" value="AT5G44940.1"/>
    <property type="gene ID" value="AT5G44940"/>
</dbReference>
<dbReference type="KEGG" id="ath:AT5G44940"/>
<dbReference type="Araport" id="AT5G44940"/>
<dbReference type="TAIR" id="AT5G44940"/>
<dbReference type="HOGENOM" id="CLU_010721_1_3_1"/>
<dbReference type="InParanoid" id="Q9FLA3"/>
<dbReference type="OMA" id="GCEIINH"/>
<dbReference type="PhylomeDB" id="Q9FLA3"/>
<dbReference type="PRO" id="PR:Q9FLA3"/>
<dbReference type="Proteomes" id="UP000006548">
    <property type="component" value="Chromosome 5"/>
</dbReference>
<dbReference type="ExpressionAtlas" id="Q9FLA3">
    <property type="expression patterns" value="baseline"/>
</dbReference>
<dbReference type="CDD" id="cd22160">
    <property type="entry name" value="F-box_AtFBL13-like"/>
    <property type="match status" value="1"/>
</dbReference>
<dbReference type="Gene3D" id="3.80.10.10">
    <property type="entry name" value="Ribonuclease Inhibitor"/>
    <property type="match status" value="1"/>
</dbReference>
<dbReference type="InterPro" id="IPR036047">
    <property type="entry name" value="F-box-like_dom_sf"/>
</dbReference>
<dbReference type="InterPro" id="IPR053781">
    <property type="entry name" value="F-box_AtFBL13-like"/>
</dbReference>
<dbReference type="InterPro" id="IPR001810">
    <property type="entry name" value="F-box_dom"/>
</dbReference>
<dbReference type="InterPro" id="IPR006566">
    <property type="entry name" value="FBD"/>
</dbReference>
<dbReference type="InterPro" id="IPR050232">
    <property type="entry name" value="FBL13/AtMIF1-like"/>
</dbReference>
<dbReference type="InterPro" id="IPR032675">
    <property type="entry name" value="LRR_dom_sf"/>
</dbReference>
<dbReference type="PANTHER" id="PTHR31900">
    <property type="entry name" value="F-BOX/RNI SUPERFAMILY PROTEIN-RELATED"/>
    <property type="match status" value="1"/>
</dbReference>
<dbReference type="PANTHER" id="PTHR31900:SF33">
    <property type="entry name" value="PROTEIN WITH RNI-LIKE_FBD-LIKE DOMAIN"/>
    <property type="match status" value="1"/>
</dbReference>
<dbReference type="Pfam" id="PF00646">
    <property type="entry name" value="F-box"/>
    <property type="match status" value="1"/>
</dbReference>
<dbReference type="Pfam" id="PF08387">
    <property type="entry name" value="FBD"/>
    <property type="match status" value="1"/>
</dbReference>
<dbReference type="SMART" id="SM00579">
    <property type="entry name" value="FBD"/>
    <property type="match status" value="1"/>
</dbReference>
<dbReference type="SMART" id="SM00256">
    <property type="entry name" value="FBOX"/>
    <property type="match status" value="1"/>
</dbReference>
<dbReference type="SUPFAM" id="SSF81383">
    <property type="entry name" value="F-box domain"/>
    <property type="match status" value="1"/>
</dbReference>
<dbReference type="SUPFAM" id="SSF52047">
    <property type="entry name" value="RNI-like"/>
    <property type="match status" value="1"/>
</dbReference>
<gene>
    <name type="ordered locus">At5g44940</name>
    <name type="ORF">K21C13.13</name>
</gene>
<name>FBD42_ARATH</name>